<sequence>MSTQTVTIKSLGAQGDGIAHCPDGPVYVPFALPGETVAIAKVKDQGTVMSITEASADRRDPVCRHFGPEGINGTCGGCSLQHLADQPYHAFKRELVVSALRSKGLTPPVDDLVICRPGERRRAVFAARKTEKGLLLGFSQANSHHIVAIEECPVTSPGIVSRFDAIRAIGLSMVANAEPFRITVLETLSGLDISVEGIKSVNDKQRRTLTETVLAMRGIARVSLSGEILIEPQKPIIEFGGIPVSPPAGGFTQATKQAEDAMAELMLAHVGKSKRIADLFCGSGTFALRLARIGRVHAVEAEDKALKALDFAARNTQGLKPVSVEKRDLFRRPLMTSELKNYDAVVFDPPRAGAEVQCKELARSTVKKIVAVSCNPLTLARDLAILTEGGYRVTRVTPVDQFLWSPHVEAVAVLEK</sequence>
<protein>
    <recommendedName>
        <fullName>Uncharacterized RNA methyltransferase Atu0735</fullName>
        <ecNumber>2.1.1.-</ecNumber>
    </recommendedName>
</protein>
<reference key="1">
    <citation type="journal article" date="2001" name="Science">
        <title>The genome of the natural genetic engineer Agrobacterium tumefaciens C58.</title>
        <authorList>
            <person name="Wood D.W."/>
            <person name="Setubal J.C."/>
            <person name="Kaul R."/>
            <person name="Monks D.E."/>
            <person name="Kitajima J.P."/>
            <person name="Okura V.K."/>
            <person name="Zhou Y."/>
            <person name="Chen L."/>
            <person name="Wood G.E."/>
            <person name="Almeida N.F. Jr."/>
            <person name="Woo L."/>
            <person name="Chen Y."/>
            <person name="Paulsen I.T."/>
            <person name="Eisen J.A."/>
            <person name="Karp P.D."/>
            <person name="Bovee D. Sr."/>
            <person name="Chapman P."/>
            <person name="Clendenning J."/>
            <person name="Deatherage G."/>
            <person name="Gillet W."/>
            <person name="Grant C."/>
            <person name="Kutyavin T."/>
            <person name="Levy R."/>
            <person name="Li M.-J."/>
            <person name="McClelland E."/>
            <person name="Palmieri A."/>
            <person name="Raymond C."/>
            <person name="Rouse G."/>
            <person name="Saenphimmachak C."/>
            <person name="Wu Z."/>
            <person name="Romero P."/>
            <person name="Gordon D."/>
            <person name="Zhang S."/>
            <person name="Yoo H."/>
            <person name="Tao Y."/>
            <person name="Biddle P."/>
            <person name="Jung M."/>
            <person name="Krespan W."/>
            <person name="Perry M."/>
            <person name="Gordon-Kamm B."/>
            <person name="Liao L."/>
            <person name="Kim S."/>
            <person name="Hendrick C."/>
            <person name="Zhao Z.-Y."/>
            <person name="Dolan M."/>
            <person name="Chumley F."/>
            <person name="Tingey S.V."/>
            <person name="Tomb J.-F."/>
            <person name="Gordon M.P."/>
            <person name="Olson M.V."/>
            <person name="Nester E.W."/>
        </authorList>
    </citation>
    <scope>NUCLEOTIDE SEQUENCE [LARGE SCALE GENOMIC DNA]</scope>
    <source>
        <strain>C58 / ATCC 33970</strain>
    </source>
</reference>
<reference key="2">
    <citation type="journal article" date="2001" name="Science">
        <title>Genome sequence of the plant pathogen and biotechnology agent Agrobacterium tumefaciens C58.</title>
        <authorList>
            <person name="Goodner B."/>
            <person name="Hinkle G."/>
            <person name="Gattung S."/>
            <person name="Miller N."/>
            <person name="Blanchard M."/>
            <person name="Qurollo B."/>
            <person name="Goldman B.S."/>
            <person name="Cao Y."/>
            <person name="Askenazi M."/>
            <person name="Halling C."/>
            <person name="Mullin L."/>
            <person name="Houmiel K."/>
            <person name="Gordon J."/>
            <person name="Vaudin M."/>
            <person name="Iartchouk O."/>
            <person name="Epp A."/>
            <person name="Liu F."/>
            <person name="Wollam C."/>
            <person name="Allinger M."/>
            <person name="Doughty D."/>
            <person name="Scott C."/>
            <person name="Lappas C."/>
            <person name="Markelz B."/>
            <person name="Flanagan C."/>
            <person name="Crowell C."/>
            <person name="Gurson J."/>
            <person name="Lomo C."/>
            <person name="Sear C."/>
            <person name="Strub G."/>
            <person name="Cielo C."/>
            <person name="Slater S."/>
        </authorList>
    </citation>
    <scope>NUCLEOTIDE SEQUENCE [LARGE SCALE GENOMIC DNA]</scope>
    <source>
        <strain>C58 / ATCC 33970</strain>
    </source>
</reference>
<keyword id="KW-0004">4Fe-4S</keyword>
<keyword id="KW-0408">Iron</keyword>
<keyword id="KW-0411">Iron-sulfur</keyword>
<keyword id="KW-0479">Metal-binding</keyword>
<keyword id="KW-0489">Methyltransferase</keyword>
<keyword id="KW-1185">Reference proteome</keyword>
<keyword id="KW-0949">S-adenosyl-L-methionine</keyword>
<keyword id="KW-0808">Transferase</keyword>
<feature type="chain" id="PRO_0000161943" description="Uncharacterized RNA methyltransferase Atu0735">
    <location>
        <begin position="1"/>
        <end position="416"/>
    </location>
</feature>
<feature type="active site" description="Nucleophile" evidence="2">
    <location>
        <position position="374"/>
    </location>
</feature>
<feature type="binding site" evidence="1">
    <location>
        <position position="63"/>
    </location>
    <ligand>
        <name>[4Fe-4S] cluster</name>
        <dbReference type="ChEBI" id="CHEBI:49883"/>
    </ligand>
</feature>
<feature type="binding site" evidence="1">
    <location>
        <position position="75"/>
    </location>
    <ligand>
        <name>[4Fe-4S] cluster</name>
        <dbReference type="ChEBI" id="CHEBI:49883"/>
    </ligand>
</feature>
<feature type="binding site" evidence="1">
    <location>
        <position position="78"/>
    </location>
    <ligand>
        <name>[4Fe-4S] cluster</name>
        <dbReference type="ChEBI" id="CHEBI:49883"/>
    </ligand>
</feature>
<feature type="binding site" evidence="1">
    <location>
        <position position="152"/>
    </location>
    <ligand>
        <name>[4Fe-4S] cluster</name>
        <dbReference type="ChEBI" id="CHEBI:49883"/>
    </ligand>
</feature>
<feature type="binding site" evidence="2">
    <location>
        <position position="253"/>
    </location>
    <ligand>
        <name>S-adenosyl-L-methionine</name>
        <dbReference type="ChEBI" id="CHEBI:59789"/>
    </ligand>
</feature>
<feature type="binding site" evidence="2">
    <location>
        <position position="280"/>
    </location>
    <ligand>
        <name>S-adenosyl-L-methionine</name>
        <dbReference type="ChEBI" id="CHEBI:59789"/>
    </ligand>
</feature>
<feature type="binding site" evidence="2">
    <location>
        <position position="300"/>
    </location>
    <ligand>
        <name>S-adenosyl-L-methionine</name>
        <dbReference type="ChEBI" id="CHEBI:59789"/>
    </ligand>
</feature>
<feature type="binding site" evidence="2">
    <location>
        <position position="348"/>
    </location>
    <ligand>
        <name>S-adenosyl-L-methionine</name>
        <dbReference type="ChEBI" id="CHEBI:59789"/>
    </ligand>
</feature>
<comment type="similarity">
    <text evidence="2">Belongs to the class I-like SAM-binding methyltransferase superfamily. RNA M5U methyltransferase family.</text>
</comment>
<gene>
    <name type="ordered locus">Atu0735</name>
    <name type="ORF">AGR_C_1331</name>
</gene>
<dbReference type="EC" id="2.1.1.-"/>
<dbReference type="EMBL" id="AE007869">
    <property type="protein sequence ID" value="AAK86544.1"/>
    <property type="molecule type" value="Genomic_DNA"/>
</dbReference>
<dbReference type="PIR" id="AI2666">
    <property type="entry name" value="AI2666"/>
</dbReference>
<dbReference type="PIR" id="G97448">
    <property type="entry name" value="G97448"/>
</dbReference>
<dbReference type="RefSeq" id="NP_353759.1">
    <property type="nucleotide sequence ID" value="NC_003062.2"/>
</dbReference>
<dbReference type="RefSeq" id="WP_010971108.1">
    <property type="nucleotide sequence ID" value="NC_003062.2"/>
</dbReference>
<dbReference type="SMR" id="Q8UHE7"/>
<dbReference type="STRING" id="176299.Atu0735"/>
<dbReference type="EnsemblBacteria" id="AAK86544">
    <property type="protein sequence ID" value="AAK86544"/>
    <property type="gene ID" value="Atu0735"/>
</dbReference>
<dbReference type="GeneID" id="1132773"/>
<dbReference type="KEGG" id="atu:Atu0735"/>
<dbReference type="PATRIC" id="fig|176299.10.peg.732"/>
<dbReference type="eggNOG" id="COG2265">
    <property type="taxonomic scope" value="Bacteria"/>
</dbReference>
<dbReference type="HOGENOM" id="CLU_014689_8_0_5"/>
<dbReference type="OrthoDB" id="9804590at2"/>
<dbReference type="PhylomeDB" id="Q8UHE7"/>
<dbReference type="BioCyc" id="AGRO:ATU0735-MONOMER"/>
<dbReference type="Proteomes" id="UP000000813">
    <property type="component" value="Chromosome circular"/>
</dbReference>
<dbReference type="GO" id="GO:0051539">
    <property type="term" value="F:4 iron, 4 sulfur cluster binding"/>
    <property type="evidence" value="ECO:0007669"/>
    <property type="project" value="UniProtKB-KW"/>
</dbReference>
<dbReference type="GO" id="GO:0046872">
    <property type="term" value="F:metal ion binding"/>
    <property type="evidence" value="ECO:0007669"/>
    <property type="project" value="UniProtKB-KW"/>
</dbReference>
<dbReference type="GO" id="GO:0070041">
    <property type="term" value="F:rRNA (uridine-C5-)-methyltransferase activity"/>
    <property type="evidence" value="ECO:0007669"/>
    <property type="project" value="TreeGrafter"/>
</dbReference>
<dbReference type="GO" id="GO:0070475">
    <property type="term" value="P:rRNA base methylation"/>
    <property type="evidence" value="ECO:0007669"/>
    <property type="project" value="TreeGrafter"/>
</dbReference>
<dbReference type="CDD" id="cd02440">
    <property type="entry name" value="AdoMet_MTases"/>
    <property type="match status" value="1"/>
</dbReference>
<dbReference type="Gene3D" id="2.40.50.1070">
    <property type="match status" value="1"/>
</dbReference>
<dbReference type="Gene3D" id="2.40.50.140">
    <property type="entry name" value="Nucleic acid-binding proteins"/>
    <property type="match status" value="1"/>
</dbReference>
<dbReference type="Gene3D" id="3.40.50.150">
    <property type="entry name" value="Vaccinia Virus protein VP39"/>
    <property type="match status" value="1"/>
</dbReference>
<dbReference type="InterPro" id="IPR030390">
    <property type="entry name" value="MeTrfase_TrmA_AS"/>
</dbReference>
<dbReference type="InterPro" id="IPR012340">
    <property type="entry name" value="NA-bd_OB-fold"/>
</dbReference>
<dbReference type="InterPro" id="IPR029063">
    <property type="entry name" value="SAM-dependent_MTases_sf"/>
</dbReference>
<dbReference type="InterPro" id="IPR002792">
    <property type="entry name" value="TRAM_dom"/>
</dbReference>
<dbReference type="InterPro" id="IPR010280">
    <property type="entry name" value="U5_MeTrfase_fam"/>
</dbReference>
<dbReference type="PANTHER" id="PTHR11061:SF49">
    <property type="entry name" value="23S RRNA (URACIL(1939)-C(5))-METHYLTRANSFERASE RLMD"/>
    <property type="match status" value="1"/>
</dbReference>
<dbReference type="PANTHER" id="PTHR11061">
    <property type="entry name" value="RNA M5U METHYLTRANSFERASE"/>
    <property type="match status" value="1"/>
</dbReference>
<dbReference type="Pfam" id="PF01938">
    <property type="entry name" value="TRAM"/>
    <property type="match status" value="1"/>
</dbReference>
<dbReference type="Pfam" id="PF05958">
    <property type="entry name" value="tRNA_U5-meth_tr"/>
    <property type="match status" value="1"/>
</dbReference>
<dbReference type="SUPFAM" id="SSF50249">
    <property type="entry name" value="Nucleic acid-binding proteins"/>
    <property type="match status" value="1"/>
</dbReference>
<dbReference type="SUPFAM" id="SSF53335">
    <property type="entry name" value="S-adenosyl-L-methionine-dependent methyltransferases"/>
    <property type="match status" value="1"/>
</dbReference>
<dbReference type="PROSITE" id="PS51687">
    <property type="entry name" value="SAM_MT_RNA_M5U"/>
    <property type="match status" value="1"/>
</dbReference>
<dbReference type="PROSITE" id="PS01230">
    <property type="entry name" value="TRMA_1"/>
    <property type="match status" value="1"/>
</dbReference>
<accession>Q8UHE7</accession>
<accession>Q7D0T2</accession>
<evidence type="ECO:0000250" key="1"/>
<evidence type="ECO:0000255" key="2">
    <source>
        <dbReference type="PROSITE-ProRule" id="PRU01024"/>
    </source>
</evidence>
<proteinExistence type="inferred from homology"/>
<name>Y735_AGRFC</name>
<organism>
    <name type="scientific">Agrobacterium fabrum (strain C58 / ATCC 33970)</name>
    <name type="common">Agrobacterium tumefaciens (strain C58)</name>
    <dbReference type="NCBI Taxonomy" id="176299"/>
    <lineage>
        <taxon>Bacteria</taxon>
        <taxon>Pseudomonadati</taxon>
        <taxon>Pseudomonadota</taxon>
        <taxon>Alphaproteobacteria</taxon>
        <taxon>Hyphomicrobiales</taxon>
        <taxon>Rhizobiaceae</taxon>
        <taxon>Rhizobium/Agrobacterium group</taxon>
        <taxon>Agrobacterium</taxon>
        <taxon>Agrobacterium tumefaciens complex</taxon>
    </lineage>
</organism>